<accession>P37754</accession>
<gene>
    <name type="primary">gnd</name>
</gene>
<sequence length="468" mass="51625">MSKQQIGVVGMAVMGRNLALNIESRGYTVSVFNRSREKTEEVIAENPGKKLVPYYTVQEFVESLETPRRILLMVKAGSGTDSAIDSLKPYLDKGDIIIDGGNTFFQDTIRRNRELSAEGFNFIGTGVSGGEEGALKGPSIMPGGQKEAYELVAPILKQIAAVAEDGEPCVTYIGADGAGHYVKMVHNGIEYGDMQLIAEAYALLKGGLTLSNEELAQTFTEWNEGELSSYLYDITKDIFTKKDEEGKYLVDVILDEAANKGTGKWTSQSSLDLGEPLSLITESVFPRYISSLKDQRVAASKVLSGPQAQPAGDKAEFIEKVRRALYLGKIVSYAQGFSQLRAASDEYNWELNYAEIAKIFRAGCIIRAQFLQKITDAYAQNAGIANLLLAPYFKQIADDYQQALRDVVAYAVQNGIRVPTFSAAIAYYDSYRSAVLPANLIQAQRDYFGAHTYKRTDKEGVFHTEWLE</sequence>
<reference key="1">
    <citation type="journal article" date="1994" name="J. Bacteriol.">
        <title>Cloning and analysis of duplicated rfbM and rfbK genes involved in the formation of GDP-mannose in Escherichia coli O9:K30 and participation of rfb genes in the synthesis of the group I K30 capsular polysaccharide.</title>
        <authorList>
            <person name="Jayaratne P."/>
            <person name="Bronner D."/>
            <person name="Maclachlan R.P."/>
            <person name="Dodgson C."/>
            <person name="Kido N."/>
            <person name="Whitfield C."/>
        </authorList>
    </citation>
    <scope>NUCLEOTIDE SEQUENCE [GENOMIC DNA]</scope>
    <source>
        <strain>O9a:K30:H12 / E69</strain>
    </source>
</reference>
<proteinExistence type="inferred from homology"/>
<organism>
    <name type="scientific">Escherichia coli</name>
    <dbReference type="NCBI Taxonomy" id="562"/>
    <lineage>
        <taxon>Bacteria</taxon>
        <taxon>Pseudomonadati</taxon>
        <taxon>Pseudomonadota</taxon>
        <taxon>Gammaproteobacteria</taxon>
        <taxon>Enterobacterales</taxon>
        <taxon>Enterobacteriaceae</taxon>
        <taxon>Escherichia</taxon>
    </lineage>
</organism>
<dbReference type="EC" id="1.1.1.44"/>
<dbReference type="EMBL" id="L27646">
    <property type="protein sequence ID" value="AAA21136.1"/>
    <property type="molecule type" value="Genomic_DNA"/>
</dbReference>
<dbReference type="PIR" id="I41250">
    <property type="entry name" value="I41250"/>
</dbReference>
<dbReference type="SMR" id="P37754"/>
<dbReference type="STRING" id="585034.ECIAI1_2109"/>
<dbReference type="eggNOG" id="COG0362">
    <property type="taxonomic scope" value="Bacteria"/>
</dbReference>
<dbReference type="UniPathway" id="UPA00115">
    <property type="reaction ID" value="UER00410"/>
</dbReference>
<dbReference type="GO" id="GO:0050661">
    <property type="term" value="F:NADP binding"/>
    <property type="evidence" value="ECO:0007669"/>
    <property type="project" value="InterPro"/>
</dbReference>
<dbReference type="GO" id="GO:0004616">
    <property type="term" value="F:phosphogluconate dehydrogenase (decarboxylating) activity"/>
    <property type="evidence" value="ECO:0000250"/>
    <property type="project" value="UniProtKB"/>
</dbReference>
<dbReference type="GO" id="GO:0019521">
    <property type="term" value="P:D-gluconate metabolic process"/>
    <property type="evidence" value="ECO:0007669"/>
    <property type="project" value="UniProtKB-KW"/>
</dbReference>
<dbReference type="GO" id="GO:0016054">
    <property type="term" value="P:organic acid catabolic process"/>
    <property type="evidence" value="ECO:0007669"/>
    <property type="project" value="UniProtKB-ARBA"/>
</dbReference>
<dbReference type="GO" id="GO:0006098">
    <property type="term" value="P:pentose-phosphate shunt"/>
    <property type="evidence" value="ECO:0000250"/>
    <property type="project" value="UniProtKB"/>
</dbReference>
<dbReference type="FunFam" id="1.10.1040.10:FF:000002">
    <property type="entry name" value="6-phosphogluconate dehydrogenase, decarboxylating"/>
    <property type="match status" value="1"/>
</dbReference>
<dbReference type="FunFam" id="1.20.5.320:FF:000001">
    <property type="entry name" value="6-phosphogluconate dehydrogenase, decarboxylating"/>
    <property type="match status" value="1"/>
</dbReference>
<dbReference type="FunFam" id="3.40.50.720:FF:000007">
    <property type="entry name" value="6-phosphogluconate dehydrogenase, decarboxylating"/>
    <property type="match status" value="1"/>
</dbReference>
<dbReference type="Gene3D" id="1.20.5.320">
    <property type="entry name" value="6-Phosphogluconate Dehydrogenase, domain 3"/>
    <property type="match status" value="1"/>
</dbReference>
<dbReference type="Gene3D" id="1.10.1040.10">
    <property type="entry name" value="N-(1-d-carboxylethyl)-l-norvaline Dehydrogenase, domain 2"/>
    <property type="match status" value="1"/>
</dbReference>
<dbReference type="Gene3D" id="3.40.50.720">
    <property type="entry name" value="NAD(P)-binding Rossmann-like Domain"/>
    <property type="match status" value="1"/>
</dbReference>
<dbReference type="InterPro" id="IPR008927">
    <property type="entry name" value="6-PGluconate_DH-like_C_sf"/>
</dbReference>
<dbReference type="InterPro" id="IPR013328">
    <property type="entry name" value="6PGD_dom2"/>
</dbReference>
<dbReference type="InterPro" id="IPR006114">
    <property type="entry name" value="6PGDH_C"/>
</dbReference>
<dbReference type="InterPro" id="IPR006113">
    <property type="entry name" value="6PGDH_Gnd/GntZ"/>
</dbReference>
<dbReference type="InterPro" id="IPR006115">
    <property type="entry name" value="6PGDH_NADP-bd"/>
</dbReference>
<dbReference type="InterPro" id="IPR006184">
    <property type="entry name" value="6PGdom_BS"/>
</dbReference>
<dbReference type="InterPro" id="IPR036291">
    <property type="entry name" value="NAD(P)-bd_dom_sf"/>
</dbReference>
<dbReference type="InterPro" id="IPR006183">
    <property type="entry name" value="Pgluconate_DH"/>
</dbReference>
<dbReference type="NCBIfam" id="TIGR00873">
    <property type="entry name" value="gnd"/>
    <property type="match status" value="1"/>
</dbReference>
<dbReference type="NCBIfam" id="NF006765">
    <property type="entry name" value="PRK09287.1"/>
    <property type="match status" value="1"/>
</dbReference>
<dbReference type="PANTHER" id="PTHR11811">
    <property type="entry name" value="6-PHOSPHOGLUCONATE DEHYDROGENASE"/>
    <property type="match status" value="1"/>
</dbReference>
<dbReference type="Pfam" id="PF00393">
    <property type="entry name" value="6PGD"/>
    <property type="match status" value="1"/>
</dbReference>
<dbReference type="Pfam" id="PF03446">
    <property type="entry name" value="NAD_binding_2"/>
    <property type="match status" value="1"/>
</dbReference>
<dbReference type="PIRSF" id="PIRSF000109">
    <property type="entry name" value="6PGD"/>
    <property type="match status" value="1"/>
</dbReference>
<dbReference type="PRINTS" id="PR00076">
    <property type="entry name" value="6PGDHDRGNASE"/>
</dbReference>
<dbReference type="SMART" id="SM01350">
    <property type="entry name" value="6PGD"/>
    <property type="match status" value="1"/>
</dbReference>
<dbReference type="SUPFAM" id="SSF48179">
    <property type="entry name" value="6-phosphogluconate dehydrogenase C-terminal domain-like"/>
    <property type="match status" value="1"/>
</dbReference>
<dbReference type="SUPFAM" id="SSF51735">
    <property type="entry name" value="NAD(P)-binding Rossmann-fold domains"/>
    <property type="match status" value="1"/>
</dbReference>
<dbReference type="PROSITE" id="PS00461">
    <property type="entry name" value="6PGD"/>
    <property type="match status" value="1"/>
</dbReference>
<protein>
    <recommendedName>
        <fullName>6-phosphogluconate dehydrogenase, decarboxylating</fullName>
        <ecNumber>1.1.1.44</ecNumber>
    </recommendedName>
</protein>
<feature type="chain" id="PRO_0000090038" description="6-phosphogluconate dehydrogenase, decarboxylating">
    <location>
        <begin position="1"/>
        <end position="468"/>
    </location>
</feature>
<feature type="active site" description="Proton acceptor" evidence="1">
    <location>
        <position position="183"/>
    </location>
</feature>
<feature type="active site" description="Proton donor" evidence="1">
    <location>
        <position position="190"/>
    </location>
</feature>
<feature type="binding site" evidence="1">
    <location>
        <begin position="10"/>
        <end position="15"/>
    </location>
    <ligand>
        <name>NADP(+)</name>
        <dbReference type="ChEBI" id="CHEBI:58349"/>
    </ligand>
</feature>
<feature type="binding site" evidence="1">
    <location>
        <begin position="33"/>
        <end position="35"/>
    </location>
    <ligand>
        <name>NADP(+)</name>
        <dbReference type="ChEBI" id="CHEBI:58349"/>
    </ligand>
</feature>
<feature type="binding site" evidence="1">
    <location>
        <begin position="74"/>
        <end position="76"/>
    </location>
    <ligand>
        <name>NADP(+)</name>
        <dbReference type="ChEBI" id="CHEBI:58349"/>
    </ligand>
</feature>
<feature type="binding site" evidence="1">
    <location>
        <position position="102"/>
    </location>
    <ligand>
        <name>NADP(+)</name>
        <dbReference type="ChEBI" id="CHEBI:58349"/>
    </ligand>
</feature>
<feature type="binding site" description="in other chain" evidence="1">
    <location>
        <position position="102"/>
    </location>
    <ligand>
        <name>substrate</name>
        <note>ligand shared between dimeric partners</note>
    </ligand>
</feature>
<feature type="binding site" description="in other chain" evidence="1">
    <location>
        <begin position="128"/>
        <end position="130"/>
    </location>
    <ligand>
        <name>substrate</name>
        <note>ligand shared between dimeric partners</note>
    </ligand>
</feature>
<feature type="binding site" description="in other chain" evidence="1">
    <location>
        <begin position="186"/>
        <end position="187"/>
    </location>
    <ligand>
        <name>substrate</name>
        <note>ligand shared between dimeric partners</note>
    </ligand>
</feature>
<feature type="binding site" description="in other chain" evidence="1">
    <location>
        <position position="191"/>
    </location>
    <ligand>
        <name>substrate</name>
        <note>ligand shared between dimeric partners</note>
    </ligand>
</feature>
<feature type="binding site" description="in other chain" evidence="1">
    <location>
        <position position="260"/>
    </location>
    <ligand>
        <name>substrate</name>
        <note>ligand shared between dimeric partners</note>
    </ligand>
</feature>
<feature type="binding site" description="in other chain" evidence="1">
    <location>
        <position position="287"/>
    </location>
    <ligand>
        <name>substrate</name>
        <note>ligand shared between dimeric partners</note>
    </ligand>
</feature>
<feature type="binding site" evidence="1">
    <location>
        <position position="445"/>
    </location>
    <ligand>
        <name>substrate</name>
        <note>ligand shared between dimeric partners</note>
    </ligand>
</feature>
<feature type="binding site" evidence="1">
    <location>
        <position position="451"/>
    </location>
    <ligand>
        <name>substrate</name>
        <note>ligand shared between dimeric partners</note>
    </ligand>
</feature>
<keyword id="KW-0311">Gluconate utilization</keyword>
<keyword id="KW-0521">NADP</keyword>
<keyword id="KW-0560">Oxidoreductase</keyword>
<keyword id="KW-0570">Pentose shunt</keyword>
<name>6PGD9_ECOLX</name>
<comment type="function">
    <text evidence="1">Catalyzes the oxidative decarboxylation of 6-phosphogluconate to ribulose 5-phosphate and CO(2), with concomitant reduction of NADP to NADPH.</text>
</comment>
<comment type="catalytic activity">
    <reaction>
        <text>6-phospho-D-gluconate + NADP(+) = D-ribulose 5-phosphate + CO2 + NADPH</text>
        <dbReference type="Rhea" id="RHEA:10116"/>
        <dbReference type="ChEBI" id="CHEBI:16526"/>
        <dbReference type="ChEBI" id="CHEBI:57783"/>
        <dbReference type="ChEBI" id="CHEBI:58121"/>
        <dbReference type="ChEBI" id="CHEBI:58349"/>
        <dbReference type="ChEBI" id="CHEBI:58759"/>
        <dbReference type="EC" id="1.1.1.44"/>
    </reaction>
</comment>
<comment type="pathway">
    <text>Carbohydrate degradation; pentose phosphate pathway; D-ribulose 5-phosphate from D-glucose 6-phosphate (oxidative stage): step 3/3.</text>
</comment>
<comment type="subunit">
    <text evidence="1">Homodimer.</text>
</comment>
<comment type="similarity">
    <text evidence="2">Belongs to the 6-phosphogluconate dehydrogenase family.</text>
</comment>
<evidence type="ECO:0000250" key="1"/>
<evidence type="ECO:0000305" key="2"/>